<sequence length="214" mass="23586">MRIILLGAPGAGKGTQAQFIMEKYGIPQISTGDMLRAAVKSGSELGKQAKDIMDAGKLVTDELVIALVKERIAQEDCRNGFLLDGFPRTIPQADAMKEAGINVDYVLEFDVPDELIVDRIVGRRVHAPSGRVYHVKFNPPKVEGKDDVTGEELTTRKDDQEETVRKRLVEYHQMTAPLIGYYSKEAEAGNTKYAKVDGTKPVAEVRADLEKILG</sequence>
<accession>P69441</accession>
<accession>P05082</accession>
<accession>P77123</accession>
<accession>Q2MBV3</accession>
<keyword id="KW-0002">3D-structure</keyword>
<keyword id="KW-0007">Acetylation</keyword>
<keyword id="KW-0067">ATP-binding</keyword>
<keyword id="KW-0963">Cytoplasm</keyword>
<keyword id="KW-0903">Direct protein sequencing</keyword>
<keyword id="KW-0418">Kinase</keyword>
<keyword id="KW-0545">Nucleotide biosynthesis</keyword>
<keyword id="KW-0547">Nucleotide-binding</keyword>
<keyword id="KW-1185">Reference proteome</keyword>
<keyword id="KW-0808">Transferase</keyword>
<dbReference type="EC" id="2.7.4.3" evidence="1"/>
<dbReference type="EMBL" id="X03038">
    <property type="protein sequence ID" value="CAA26840.1"/>
    <property type="molecule type" value="Genomic_DNA"/>
</dbReference>
<dbReference type="EMBL" id="U82664">
    <property type="protein sequence ID" value="AAB40228.1"/>
    <property type="status" value="ALT_INIT"/>
    <property type="molecule type" value="Genomic_DNA"/>
</dbReference>
<dbReference type="EMBL" id="U00096">
    <property type="protein sequence ID" value="AAC73576.1"/>
    <property type="molecule type" value="Genomic_DNA"/>
</dbReference>
<dbReference type="EMBL" id="AP009048">
    <property type="protein sequence ID" value="BAE76253.1"/>
    <property type="molecule type" value="Genomic_DNA"/>
</dbReference>
<dbReference type="EMBL" id="M38777">
    <property type="protein sequence ID" value="AAA23461.1"/>
    <property type="molecule type" value="Genomic_DNA"/>
</dbReference>
<dbReference type="EMBL" id="D90259">
    <property type="protein sequence ID" value="BAA14303.1"/>
    <property type="molecule type" value="Genomic_DNA"/>
</dbReference>
<dbReference type="PIR" id="A24275">
    <property type="entry name" value="KIECA"/>
</dbReference>
<dbReference type="RefSeq" id="NP_415007.1">
    <property type="nucleotide sequence ID" value="NC_000913.3"/>
</dbReference>
<dbReference type="RefSeq" id="WP_001220233.1">
    <property type="nucleotide sequence ID" value="NZ_STEB01000007.1"/>
</dbReference>
<dbReference type="PDB" id="1AKE">
    <property type="method" value="X-ray"/>
    <property type="resolution" value="2.00 A"/>
    <property type="chains" value="A/B=1-214"/>
</dbReference>
<dbReference type="PDB" id="1ANK">
    <property type="method" value="X-ray"/>
    <property type="resolution" value="2.00 A"/>
    <property type="chains" value="A/B=1-214"/>
</dbReference>
<dbReference type="PDB" id="1E4V">
    <property type="method" value="X-ray"/>
    <property type="resolution" value="1.85 A"/>
    <property type="chains" value="A/B=1-214"/>
</dbReference>
<dbReference type="PDB" id="1E4Y">
    <property type="method" value="X-ray"/>
    <property type="resolution" value="1.85 A"/>
    <property type="chains" value="A/B=1-214"/>
</dbReference>
<dbReference type="PDB" id="2ECK">
    <property type="method" value="X-ray"/>
    <property type="resolution" value="2.80 A"/>
    <property type="chains" value="A/B=1-214"/>
</dbReference>
<dbReference type="PDB" id="3HPQ">
    <property type="method" value="X-ray"/>
    <property type="resolution" value="2.00 A"/>
    <property type="chains" value="A/B=1-214"/>
</dbReference>
<dbReference type="PDB" id="3HPR">
    <property type="method" value="X-ray"/>
    <property type="resolution" value="2.00 A"/>
    <property type="chains" value="A/B=1-214"/>
</dbReference>
<dbReference type="PDB" id="4AKE">
    <property type="method" value="X-ray"/>
    <property type="resolution" value="2.20 A"/>
    <property type="chains" value="A/B=1-214"/>
</dbReference>
<dbReference type="PDB" id="4X8H">
    <property type="method" value="X-ray"/>
    <property type="resolution" value="2.50 A"/>
    <property type="chains" value="A=1-214"/>
</dbReference>
<dbReference type="PDB" id="4X8L">
    <property type="method" value="X-ray"/>
    <property type="resolution" value="1.70 A"/>
    <property type="chains" value="A/B=1-214"/>
</dbReference>
<dbReference type="PDB" id="4X8M">
    <property type="method" value="X-ray"/>
    <property type="resolution" value="2.60 A"/>
    <property type="chains" value="A=1-214"/>
</dbReference>
<dbReference type="PDB" id="4X8O">
    <property type="method" value="X-ray"/>
    <property type="resolution" value="2.10 A"/>
    <property type="chains" value="A/B=1-214"/>
</dbReference>
<dbReference type="PDB" id="5EJE">
    <property type="method" value="X-ray"/>
    <property type="resolution" value="1.90 A"/>
    <property type="chains" value="A/B=1-214"/>
</dbReference>
<dbReference type="PDB" id="6F7U">
    <property type="method" value="X-ray"/>
    <property type="resolution" value="1.40 A"/>
    <property type="chains" value="A=1-214"/>
</dbReference>
<dbReference type="PDB" id="6HAM">
    <property type="method" value="X-ray"/>
    <property type="resolution" value="2.55 A"/>
    <property type="chains" value="A=1-214"/>
</dbReference>
<dbReference type="PDB" id="6HAP">
    <property type="method" value="X-ray"/>
    <property type="resolution" value="2.70 A"/>
    <property type="chains" value="A=1-214"/>
</dbReference>
<dbReference type="PDB" id="6RZE">
    <property type="method" value="X-ray"/>
    <property type="resolution" value="1.69 A"/>
    <property type="chains" value="A=1-214"/>
</dbReference>
<dbReference type="PDB" id="6S36">
    <property type="method" value="X-ray"/>
    <property type="resolution" value="1.60 A"/>
    <property type="chains" value="A=1-214"/>
</dbReference>
<dbReference type="PDB" id="7APU">
    <property type="method" value="X-ray"/>
    <property type="resolution" value="1.36 A"/>
    <property type="chains" value="A/B=1-214"/>
</dbReference>
<dbReference type="PDB" id="8BQF">
    <property type="method" value="X-ray"/>
    <property type="resolution" value="2.05 A"/>
    <property type="chains" value="A/B/C/D/E/F=1-214"/>
</dbReference>
<dbReference type="PDB" id="8CRG">
    <property type="method" value="X-ray"/>
    <property type="resolution" value="1.49 A"/>
    <property type="chains" value="AA/BA=1-214"/>
</dbReference>
<dbReference type="PDB" id="8PVW">
    <property type="method" value="X-ray"/>
    <property type="resolution" value="2.00 A"/>
    <property type="chains" value="A=1-214"/>
</dbReference>
<dbReference type="PDB" id="8Q2B">
    <property type="method" value="X-ray"/>
    <property type="resolution" value="1.76 A"/>
    <property type="chains" value="A/B=1-214"/>
</dbReference>
<dbReference type="PDB" id="8RJ4">
    <property type="method" value="X-ray"/>
    <property type="resolution" value="2.11 A"/>
    <property type="chains" value="A/B/C/D=1-214"/>
</dbReference>
<dbReference type="PDB" id="8RJ6">
    <property type="method" value="X-ray"/>
    <property type="resolution" value="1.90 A"/>
    <property type="chains" value="A/B=1-214"/>
</dbReference>
<dbReference type="PDB" id="8RJ9">
    <property type="method" value="X-ray"/>
    <property type="resolution" value="1.59 A"/>
    <property type="chains" value="A/B=1-214"/>
</dbReference>
<dbReference type="PDBsum" id="1AKE"/>
<dbReference type="PDBsum" id="1ANK"/>
<dbReference type="PDBsum" id="1E4V"/>
<dbReference type="PDBsum" id="1E4Y"/>
<dbReference type="PDBsum" id="2ECK"/>
<dbReference type="PDBsum" id="3HPQ"/>
<dbReference type="PDBsum" id="3HPR"/>
<dbReference type="PDBsum" id="4AKE"/>
<dbReference type="PDBsum" id="4X8H"/>
<dbReference type="PDBsum" id="4X8L"/>
<dbReference type="PDBsum" id="4X8M"/>
<dbReference type="PDBsum" id="4X8O"/>
<dbReference type="PDBsum" id="5EJE"/>
<dbReference type="PDBsum" id="6F7U"/>
<dbReference type="PDBsum" id="6HAM"/>
<dbReference type="PDBsum" id="6HAP"/>
<dbReference type="PDBsum" id="6RZE"/>
<dbReference type="PDBsum" id="6S36"/>
<dbReference type="PDBsum" id="7APU"/>
<dbReference type="PDBsum" id="8BQF"/>
<dbReference type="PDBsum" id="8CRG"/>
<dbReference type="PDBsum" id="8PVW"/>
<dbReference type="PDBsum" id="8Q2B"/>
<dbReference type="PDBsum" id="8RJ4"/>
<dbReference type="PDBsum" id="8RJ6"/>
<dbReference type="PDBsum" id="8RJ9"/>
<dbReference type="SMR" id="P69441"/>
<dbReference type="BioGRID" id="4261613">
    <property type="interactions" value="35"/>
</dbReference>
<dbReference type="BioGRID" id="849486">
    <property type="interactions" value="1"/>
</dbReference>
<dbReference type="DIP" id="DIP-47903N"/>
<dbReference type="FunCoup" id="P69441">
    <property type="interactions" value="938"/>
</dbReference>
<dbReference type="IntAct" id="P69441">
    <property type="interactions" value="13"/>
</dbReference>
<dbReference type="STRING" id="511145.b0474"/>
<dbReference type="DrugBank" id="DB01717">
    <property type="generic name" value="Bis(Adenosine)-5'-Pentaphosphate"/>
</dbReference>
<dbReference type="iPTMnet" id="P69441"/>
<dbReference type="jPOST" id="P69441"/>
<dbReference type="PaxDb" id="511145-b0474"/>
<dbReference type="EnsemblBacteria" id="AAC73576">
    <property type="protein sequence ID" value="AAC73576"/>
    <property type="gene ID" value="b0474"/>
</dbReference>
<dbReference type="GeneID" id="75170492"/>
<dbReference type="GeneID" id="945097"/>
<dbReference type="KEGG" id="ecj:JW0463"/>
<dbReference type="KEGG" id="eco:b0474"/>
<dbReference type="KEGG" id="ecoc:C3026_02330"/>
<dbReference type="PATRIC" id="fig|1411691.4.peg.1802"/>
<dbReference type="EchoBASE" id="EB0031"/>
<dbReference type="eggNOG" id="COG0563">
    <property type="taxonomic scope" value="Bacteria"/>
</dbReference>
<dbReference type="HOGENOM" id="CLU_032354_1_2_6"/>
<dbReference type="InParanoid" id="P69441"/>
<dbReference type="OMA" id="VYHEQTA"/>
<dbReference type="OrthoDB" id="9805030at2"/>
<dbReference type="PhylomeDB" id="P69441"/>
<dbReference type="BioCyc" id="EcoCyc:ADENYL-KIN-MONOMER"/>
<dbReference type="BioCyc" id="MetaCyc:ADENYL-KIN-MONOMER"/>
<dbReference type="BRENDA" id="2.7.4.3">
    <property type="organism ID" value="2026"/>
</dbReference>
<dbReference type="SABIO-RK" id="P69441"/>
<dbReference type="UniPathway" id="UPA00588">
    <property type="reaction ID" value="UER00649"/>
</dbReference>
<dbReference type="EvolutionaryTrace" id="P69441"/>
<dbReference type="PRO" id="PR:P69441"/>
<dbReference type="Proteomes" id="UP000000625">
    <property type="component" value="Chromosome"/>
</dbReference>
<dbReference type="GO" id="GO:0005737">
    <property type="term" value="C:cytoplasm"/>
    <property type="evidence" value="ECO:0000318"/>
    <property type="project" value="GO_Central"/>
</dbReference>
<dbReference type="GO" id="GO:0005829">
    <property type="term" value="C:cytosol"/>
    <property type="evidence" value="ECO:0000314"/>
    <property type="project" value="EcoCyc"/>
</dbReference>
<dbReference type="GO" id="GO:0004017">
    <property type="term" value="F:adenylate kinase activity"/>
    <property type="evidence" value="ECO:0000314"/>
    <property type="project" value="EcoCyc"/>
</dbReference>
<dbReference type="GO" id="GO:0016208">
    <property type="term" value="F:AMP binding"/>
    <property type="evidence" value="ECO:0000314"/>
    <property type="project" value="EcoCyc"/>
</dbReference>
<dbReference type="GO" id="GO:0005524">
    <property type="term" value="F:ATP binding"/>
    <property type="evidence" value="ECO:0000314"/>
    <property type="project" value="EcoCyc"/>
</dbReference>
<dbReference type="GO" id="GO:0000287">
    <property type="term" value="F:magnesium ion binding"/>
    <property type="evidence" value="ECO:0000314"/>
    <property type="project" value="EcoCyc"/>
</dbReference>
<dbReference type="GO" id="GO:0004550">
    <property type="term" value="F:nucleoside diphosphate kinase activity"/>
    <property type="evidence" value="ECO:0000314"/>
    <property type="project" value="EcoCyc"/>
</dbReference>
<dbReference type="GO" id="GO:0046083">
    <property type="term" value="P:adenine metabolic process"/>
    <property type="evidence" value="ECO:0000315"/>
    <property type="project" value="UniProtKB"/>
</dbReference>
<dbReference type="GO" id="GO:0006172">
    <property type="term" value="P:ADP biosynthetic process"/>
    <property type="evidence" value="ECO:0000315"/>
    <property type="project" value="EcoliWiki"/>
</dbReference>
<dbReference type="GO" id="GO:0044209">
    <property type="term" value="P:AMP salvage"/>
    <property type="evidence" value="ECO:0007669"/>
    <property type="project" value="UniProtKB-UniRule"/>
</dbReference>
<dbReference type="GO" id="GO:0009132">
    <property type="term" value="P:nucleoside diphosphate metabolic process"/>
    <property type="evidence" value="ECO:0000318"/>
    <property type="project" value="GO_Central"/>
</dbReference>
<dbReference type="GO" id="GO:0009123">
    <property type="term" value="P:nucleoside monophosphate metabolic process"/>
    <property type="evidence" value="ECO:0000318"/>
    <property type="project" value="GO_Central"/>
</dbReference>
<dbReference type="GO" id="GO:0015951">
    <property type="term" value="P:purine ribonucleotide interconversion"/>
    <property type="evidence" value="ECO:0000315"/>
    <property type="project" value="EcoCyc"/>
</dbReference>
<dbReference type="CDD" id="cd01428">
    <property type="entry name" value="ADK"/>
    <property type="match status" value="1"/>
</dbReference>
<dbReference type="FunFam" id="3.40.50.300:FF:000106">
    <property type="entry name" value="Adenylate kinase mitochondrial"/>
    <property type="match status" value="1"/>
</dbReference>
<dbReference type="Gene3D" id="3.40.50.300">
    <property type="entry name" value="P-loop containing nucleotide triphosphate hydrolases"/>
    <property type="match status" value="1"/>
</dbReference>
<dbReference type="HAMAP" id="MF_00235">
    <property type="entry name" value="Adenylate_kinase_Adk"/>
    <property type="match status" value="1"/>
</dbReference>
<dbReference type="InterPro" id="IPR006259">
    <property type="entry name" value="Adenyl_kin_sub"/>
</dbReference>
<dbReference type="InterPro" id="IPR000850">
    <property type="entry name" value="Adenylat/UMP-CMP_kin"/>
</dbReference>
<dbReference type="InterPro" id="IPR033690">
    <property type="entry name" value="Adenylat_kinase_CS"/>
</dbReference>
<dbReference type="InterPro" id="IPR007862">
    <property type="entry name" value="Adenylate_kinase_lid-dom"/>
</dbReference>
<dbReference type="InterPro" id="IPR027417">
    <property type="entry name" value="P-loop_NTPase"/>
</dbReference>
<dbReference type="NCBIfam" id="TIGR01351">
    <property type="entry name" value="adk"/>
    <property type="match status" value="1"/>
</dbReference>
<dbReference type="NCBIfam" id="NF001379">
    <property type="entry name" value="PRK00279.1-1"/>
    <property type="match status" value="1"/>
</dbReference>
<dbReference type="NCBIfam" id="NF001380">
    <property type="entry name" value="PRK00279.1-2"/>
    <property type="match status" value="1"/>
</dbReference>
<dbReference type="NCBIfam" id="NF001381">
    <property type="entry name" value="PRK00279.1-3"/>
    <property type="match status" value="1"/>
</dbReference>
<dbReference type="NCBIfam" id="NF011100">
    <property type="entry name" value="PRK14527.1"/>
    <property type="match status" value="1"/>
</dbReference>
<dbReference type="PANTHER" id="PTHR23359">
    <property type="entry name" value="NUCLEOTIDE KINASE"/>
    <property type="match status" value="1"/>
</dbReference>
<dbReference type="Pfam" id="PF00406">
    <property type="entry name" value="ADK"/>
    <property type="match status" value="1"/>
</dbReference>
<dbReference type="Pfam" id="PF05191">
    <property type="entry name" value="ADK_lid"/>
    <property type="match status" value="1"/>
</dbReference>
<dbReference type="PRINTS" id="PR00094">
    <property type="entry name" value="ADENYLTKNASE"/>
</dbReference>
<dbReference type="SUPFAM" id="SSF52540">
    <property type="entry name" value="P-loop containing nucleoside triphosphate hydrolases"/>
    <property type="match status" value="1"/>
</dbReference>
<dbReference type="PROSITE" id="PS00113">
    <property type="entry name" value="ADENYLATE_KINASE"/>
    <property type="match status" value="1"/>
</dbReference>
<evidence type="ECO:0000255" key="1">
    <source>
        <dbReference type="HAMAP-Rule" id="MF_00235"/>
    </source>
</evidence>
<evidence type="ECO:0000269" key="2">
    <source>
    </source>
</evidence>
<evidence type="ECO:0000269" key="3">
    <source>
    </source>
</evidence>
<evidence type="ECO:0000269" key="4">
    <source>
    </source>
</evidence>
<evidence type="ECO:0000269" key="5">
    <source>
    </source>
</evidence>
<evidence type="ECO:0000269" key="6">
    <source>
    </source>
</evidence>
<evidence type="ECO:0000269" key="7">
    <source>
    </source>
</evidence>
<evidence type="ECO:0000269" key="8">
    <source>
    </source>
</evidence>
<evidence type="ECO:0000269" key="9">
    <source>
    </source>
</evidence>
<evidence type="ECO:0000269" key="10">
    <source>
    </source>
</evidence>
<evidence type="ECO:0000269" key="11">
    <source>
    </source>
</evidence>
<evidence type="ECO:0000269" key="12">
    <source>
    </source>
</evidence>
<evidence type="ECO:0000269" key="13">
    <source>
    </source>
</evidence>
<evidence type="ECO:0000305" key="14"/>
<evidence type="ECO:0000305" key="15">
    <source>
    </source>
</evidence>
<evidence type="ECO:0007829" key="16">
    <source>
        <dbReference type="PDB" id="6F7U"/>
    </source>
</evidence>
<evidence type="ECO:0007829" key="17">
    <source>
        <dbReference type="PDB" id="7APU"/>
    </source>
</evidence>
<reference key="1">
    <citation type="journal article" date="1985" name="Nucleic Acids Res.">
        <title>Cloning and sequencing of the adenylate kinase gene (adk) of Escherichia coli.</title>
        <authorList>
            <person name="Brune M."/>
            <person name="Schumann R."/>
            <person name="Wittinghofer F."/>
        </authorList>
    </citation>
    <scope>NUCLEOTIDE SEQUENCE [GENOMIC DNA]</scope>
    <source>
        <strain>K12</strain>
    </source>
</reference>
<reference key="2">
    <citation type="submission" date="1997-01" db="EMBL/GenBank/DDBJ databases">
        <title>Sequence of minutes 4-25 of Escherichia coli.</title>
        <authorList>
            <person name="Chung E."/>
            <person name="Allen E."/>
            <person name="Araujo R."/>
            <person name="Aparicio A.M."/>
            <person name="Davis K."/>
            <person name="Duncan M."/>
            <person name="Federspiel N."/>
            <person name="Hyman R."/>
            <person name="Kalman S."/>
            <person name="Komp C."/>
            <person name="Kurdi O."/>
            <person name="Lew H."/>
            <person name="Lin D."/>
            <person name="Namath A."/>
            <person name="Oefner P."/>
            <person name="Roberts D."/>
            <person name="Schramm S."/>
            <person name="Davis R.W."/>
        </authorList>
    </citation>
    <scope>NUCLEOTIDE SEQUENCE [LARGE SCALE GENOMIC DNA]</scope>
    <source>
        <strain>K12 / MG1655 / ATCC 47076</strain>
    </source>
</reference>
<reference key="3">
    <citation type="journal article" date="1997" name="Science">
        <title>The complete genome sequence of Escherichia coli K-12.</title>
        <authorList>
            <person name="Blattner F.R."/>
            <person name="Plunkett G. III"/>
            <person name="Bloch C.A."/>
            <person name="Perna N.T."/>
            <person name="Burland V."/>
            <person name="Riley M."/>
            <person name="Collado-Vides J."/>
            <person name="Glasner J.D."/>
            <person name="Rode C.K."/>
            <person name="Mayhew G.F."/>
            <person name="Gregor J."/>
            <person name="Davis N.W."/>
            <person name="Kirkpatrick H.A."/>
            <person name="Goeden M.A."/>
            <person name="Rose D.J."/>
            <person name="Mau B."/>
            <person name="Shao Y."/>
        </authorList>
    </citation>
    <scope>NUCLEOTIDE SEQUENCE [LARGE SCALE GENOMIC DNA]</scope>
    <source>
        <strain>K12 / MG1655 / ATCC 47076</strain>
    </source>
</reference>
<reference key="4">
    <citation type="journal article" date="2006" name="Mol. Syst. Biol.">
        <title>Highly accurate genome sequences of Escherichia coli K-12 strains MG1655 and W3110.</title>
        <authorList>
            <person name="Hayashi K."/>
            <person name="Morooka N."/>
            <person name="Yamamoto Y."/>
            <person name="Fujita K."/>
            <person name="Isono K."/>
            <person name="Choi S."/>
            <person name="Ohtsubo E."/>
            <person name="Baba T."/>
            <person name="Wanner B.L."/>
            <person name="Mori H."/>
            <person name="Horiuchi T."/>
        </authorList>
    </citation>
    <scope>NUCLEOTIDE SEQUENCE [LARGE SCALE GENOMIC DNA]</scope>
    <source>
        <strain>K12 / W3110 / ATCC 27325 / DSM 5911</strain>
    </source>
</reference>
<reference key="5">
    <citation type="journal article" date="1987" name="Proc. Natl. Acad. Sci. U.S.A.">
        <title>Eukaryotic Mr 83,000 heat shock protein has a homologue in Escherichia coli.</title>
        <authorList>
            <person name="Bardwell J.C.A."/>
            <person name="Craig E.A."/>
        </authorList>
    </citation>
    <scope>NUCLEOTIDE SEQUENCE [GENOMIC DNA] OF 1-5</scope>
</reference>
<reference key="6">
    <citation type="journal article" date="1991" name="J. Mol. Biol.">
        <title>Isolation and characterization of visible light-sensitive mutants of Escherichia coli K12.</title>
        <authorList>
            <person name="Miyamoto K."/>
            <person name="Nakahigashi K."/>
            <person name="Nishimura K."/>
            <person name="Inokuchi H."/>
        </authorList>
    </citation>
    <scope>NUCLEOTIDE SEQUENCE [GENOMIC DNA] OF 108-214</scope>
</reference>
<reference key="7">
    <citation type="journal article" date="1997" name="Electrophoresis">
        <title>Comparing the predicted and observed properties of proteins encoded in the genome of Escherichia coli K-12.</title>
        <authorList>
            <person name="Link A.J."/>
            <person name="Robison K."/>
            <person name="Church G.M."/>
        </authorList>
    </citation>
    <scope>PROTEIN SEQUENCE OF 1-12</scope>
    <source>
        <strain>K12 / EMG2</strain>
    </source>
</reference>
<reference key="8">
    <citation type="submission" date="1996-02" db="UniProtKB">
        <authorList>
            <person name="Frutiger S."/>
            <person name="Hughes G.J."/>
            <person name="Pasquali C."/>
            <person name="Hochstrasser D.F."/>
        </authorList>
    </citation>
    <scope>PROTEIN SEQUENCE OF 1-11</scope>
    <source>
        <strain>K12 / W3110 / ATCC 27325 / DSM 5911</strain>
    </source>
</reference>
<reference key="9">
    <citation type="journal article" date="1998" name="J. Mol. Biol.">
        <title>Protein identification with N and C-terminal sequence tags in proteome projects.</title>
        <authorList>
            <person name="Wilkins M.R."/>
            <person name="Gasteiger E."/>
            <person name="Tonella L."/>
            <person name="Ou K."/>
            <person name="Tyler M."/>
            <person name="Sanchez J.-C."/>
            <person name="Gooley A.A."/>
            <person name="Walsh B.J."/>
            <person name="Bairoch A."/>
            <person name="Appel R.D."/>
            <person name="Williams K.L."/>
            <person name="Hochstrasser D.F."/>
        </authorList>
    </citation>
    <scope>PROTEIN SEQUENCE OF 1-4</scope>
    <source>
        <strain>K12 / W3110 / ATCC 27325 / DSM 5911</strain>
    </source>
</reference>
<reference key="10">
    <citation type="journal article" date="1975" name="J. Bacteriol.">
        <title>Role of adenylate kinase in the regulation of macromolecular biosynthesis in a putative mutant of Escherichia coli defective in membrane phospholipid biosynthesis.</title>
        <authorList>
            <person name="Glaser M."/>
            <person name="Nulty W."/>
            <person name="Vagelos P.R."/>
        </authorList>
    </citation>
    <scope>FUNCTION</scope>
</reference>
<reference key="11">
    <citation type="journal article" date="1980" name="J. Bacteriol.">
        <title>Genetic analysis of Escherichia coli mutants defective in adenylate kinase and sn-glycerol 3-phosphate acyltransferase.</title>
        <authorList>
            <person name="Esmon B.E."/>
            <person name="Kensil C.R."/>
            <person name="Cheng C.H."/>
            <person name="Glaser M."/>
        </authorList>
    </citation>
    <scope>FUNCTION</scope>
</reference>
<reference key="12">
    <citation type="journal article" date="1988" name="Biochemistry">
        <title>Mutations in the nucleotide binding loop of adenylate kinase of Escherichia coli.</title>
        <authorList>
            <person name="Reinstein J."/>
            <person name="Brune M."/>
            <person name="Wittinghofer A."/>
        </authorList>
    </citation>
    <scope>MUTAGENESIS OF GLY-10 AND LYS-13</scope>
</reference>
<reference key="13">
    <citation type="journal article" date="1990" name="Biochemistry">
        <title>Structurally and catalytically important residues in the phosphate binding loop of adenylate kinase of Escherichia coli.</title>
        <authorList>
            <person name="Reinstein J."/>
            <person name="Schlichting I."/>
            <person name="Wittinghofer A."/>
        </authorList>
    </citation>
    <scope>MUTAGENESIS OF PRO-9; GLY-10 AND LYS-13</scope>
</reference>
<reference key="14">
    <citation type="journal article" date="1997" name="Electrophoresis">
        <title>Escherichia coli proteome analysis using the gene-protein database.</title>
        <authorList>
            <person name="VanBogelen R.A."/>
            <person name="Abshire K.Z."/>
            <person name="Moldover B."/>
            <person name="Olson E.R."/>
            <person name="Neidhardt F.C."/>
        </authorList>
    </citation>
    <scope>IDENTIFICATION BY 2D-GEL</scope>
</reference>
<reference key="15">
    <citation type="journal article" date="1999" name="Proteins">
        <title>A new subfamily of short bacterial adenylate kinases with the Mycobacterium tuberculosis enzyme as a model: a predictive and experimental study.</title>
        <authorList>
            <person name="Munier-Lehmann H."/>
            <person name="Burlacu-Miron S."/>
            <person name="Craescu C.T."/>
            <person name="Mantsch H.H."/>
            <person name="Schultz C.P."/>
        </authorList>
    </citation>
    <scope>CATALYTIC ACTIVITY</scope>
    <scope>BIOPHYSICOCHEMICAL PROPERTIES</scope>
</reference>
<reference key="16">
    <citation type="journal article" date="2009" name="Mol. Cell. Proteomics">
        <title>Lysine acetylation is a highly abundant and evolutionarily conserved modification in Escherichia coli.</title>
        <authorList>
            <person name="Zhang J."/>
            <person name="Sprung R."/>
            <person name="Pei J."/>
            <person name="Tan X."/>
            <person name="Kim S."/>
            <person name="Zhu H."/>
            <person name="Liu C.F."/>
            <person name="Grishin N.V."/>
            <person name="Zhao Y."/>
        </authorList>
    </citation>
    <scope>ACETYLATION [LARGE SCALE ANALYSIS] AT LYS-192</scope>
    <scope>IDENTIFICATION BY MASS SPECTROMETRY</scope>
    <source>
        <strain>K12 / JW1106</strain>
        <strain>K12 / MG1655 / ATCC 47076</strain>
    </source>
</reference>
<reference key="17">
    <citation type="journal article" date="1992" name="J. Mol. Biol.">
        <title>Structure of the complex between adenylate kinase from Escherichia coli and the inhibitor Ap5A refined at 1.9-A resolution. A model for a catalytic transition state.</title>
        <authorList>
            <person name="Mueller C.W."/>
            <person name="Schulz G.E."/>
        </authorList>
    </citation>
    <scope>X-RAY CRYSTALLOGRAPHY (1.9 ANGSTROMS) OF COMPLEX WITH THE INHIBITOR AP5A</scope>
</reference>
<reference key="18">
    <citation type="journal article" date="1993" name="Proteins">
        <title>Crystal structures of two mutants of adenylate kinase from Escherichia coli that modify the Gly-loop.</title>
        <authorList>
            <person name="Mueller C.W."/>
            <person name="Schulz G.E."/>
        </authorList>
    </citation>
    <scope>X-RAY CRYSTALLOGRAPHY (1.85 ANGSTROMS) OF MUTANTS PRO-9 AND GLY-10 IN COMPLEX WITH THE INHIBITOR AP5A</scope>
</reference>
<reference key="19">
    <citation type="journal article" date="1994" name="Proteins">
        <title>The closed conformation of a highly flexible protein: the structure of E. coli adenylate kinase with bound AMP and AMPPNP.</title>
        <authorList>
            <person name="Berry M.B."/>
            <person name="Meador B."/>
            <person name="Bilderback T."/>
            <person name="Liang P."/>
            <person name="Glaser M."/>
            <person name="Phillips G.N. Jr."/>
        </authorList>
    </citation>
    <scope>X-RAY CRYSTALLOGRAPHY (2.0 ANGSTROMS) OF COMPLEX WITH AMP AND AMPPNP</scope>
</reference>
<reference key="20">
    <citation type="journal article" date="1996" name="Structure">
        <title>Adenylate kinase motions during catalysis: an energetic counterweight balancing substrate binding.</title>
        <authorList>
            <person name="Mueller C.W."/>
            <person name="Schlauderer G.J."/>
            <person name="Reinstein J."/>
            <person name="Schulz G.E."/>
        </authorList>
    </citation>
    <scope>X-RAY CRYSTALLOGRAPHY (2.2 ANGSTROMS)</scope>
    <source>
        <strain>K12</strain>
    </source>
</reference>
<reference key="21">
    <citation type="journal article" date="2006" name="Proteins">
        <title>Crystal structure of ADP/AMP complex of Escherichia coli adenylate kinase.</title>
        <authorList>
            <person name="Berry M.B."/>
            <person name="Bae E."/>
            <person name="Bilderback T.R."/>
            <person name="Glaser M."/>
            <person name="Phillips G.N. Jr."/>
        </authorList>
    </citation>
    <scope>X-RAY CRYSTALLOGRAPHY (2.80 ANGSTROMS) IN COMPLEX WITH ADP AND AMP</scope>
</reference>
<reference key="22">
    <citation type="journal article" date="2009" name="Proc. Natl. Acad. Sci. U.S.A.">
        <title>Rational modulation of conformational fluctuations in adenylate kinase reveals a local unfolding mechanism for allostery and functional adaptation in proteins.</title>
        <authorList>
            <person name="Schrank T.P."/>
            <person name="Bolen D.W."/>
            <person name="Hilser V.J."/>
        </authorList>
    </citation>
    <scope>X-RAY CRYSTALLOGRAPHY (2.00 ANGSTROMS) IN COMPLEX WITH BI-SUBSTRATE ANALOG AP5A</scope>
</reference>
<comment type="function">
    <text evidence="1 5 10">Catalyzes the reversible transfer of the terminal phosphate group between ATP and AMP. Plays an important role in cellular energy homeostasis and in adenine nucleotide metabolism.</text>
</comment>
<comment type="catalytic activity">
    <reaction evidence="1 2">
        <text>AMP + ATP = 2 ADP</text>
        <dbReference type="Rhea" id="RHEA:12973"/>
        <dbReference type="ChEBI" id="CHEBI:30616"/>
        <dbReference type="ChEBI" id="CHEBI:456215"/>
        <dbReference type="ChEBI" id="CHEBI:456216"/>
        <dbReference type="EC" id="2.7.4.3"/>
    </reaction>
</comment>
<comment type="biophysicochemical properties">
    <kinetics>
        <KM evidence="2">51 uM for ATP (at pH 7.4 and 30 degrees Celsius)</KM>
        <KM evidence="2">38 uM for AMP (at pH 7.4 and 30 degrees Celsius)</KM>
        <KM evidence="2">92 uM for ADP (at pH 7.4 and 30 degrees Celsius)</KM>
        <Vmax evidence="2">1020.0 umol/min/mg enzyme for the forward reaction (at pH 7.4 and 30 degrees Celsius)</Vmax>
        <Vmax evidence="2">605.0 umol/min/mg enzyme for the reverse reaction (at pH 7.4 and 30 degrees Celsius)</Vmax>
    </kinetics>
    <temperatureDependence>
        <text evidence="2">Optimum temperature is 45 degrees Celsius. Thermostable. Is half-inactivated at 52 degrees Celsius.</text>
    </temperatureDependence>
</comment>
<comment type="pathway">
    <text evidence="1">Purine metabolism; AMP biosynthesis via salvage pathway; AMP from ADP: step 1/1.</text>
</comment>
<comment type="subunit">
    <text evidence="1 4 7 12">Monomer.</text>
</comment>
<comment type="interaction">
    <interactant intactId="EBI-543592">
        <id>P69441</id>
    </interactant>
    <interactant intactId="EBI-543604">
        <id>P0A8T7</id>
        <label>rpoC</label>
    </interactant>
    <organismsDiffer>false</organismsDiffer>
    <experiments>2</experiments>
</comment>
<comment type="interaction">
    <interactant intactId="EBI-543592">
        <id>P69441</id>
    </interactant>
    <interactant intactId="EBI-543661">
        <id>P77806</id>
        <label>ybdL</label>
    </interactant>
    <organismsDiffer>false</organismsDiffer>
    <experiments>3</experiments>
</comment>
<comment type="subcellular location">
    <subcellularLocation>
        <location evidence="1">Cytoplasm</location>
    </subcellularLocation>
</comment>
<comment type="domain">
    <text evidence="1 15">Consists of three domains, a large central CORE domain and two small peripheral domains, NMPbind and LID, which undergo movements during catalysis. The LID domain closes over the site of phosphoryl transfer upon ATP binding. Assembling and dissambling the active center during each catalytic cycle provides an effective means to prevent ATP hydrolysis.</text>
</comment>
<comment type="similarity">
    <text evidence="1">Belongs to the adenylate kinase family.</text>
</comment>
<comment type="sequence caution" evidence="14">
    <conflict type="erroneous initiation">
        <sequence resource="EMBL-CDS" id="AAB40228"/>
    </conflict>
</comment>
<feature type="chain" id="PRO_0000158767" description="Adenylate kinase">
    <location>
        <begin position="1"/>
        <end position="214"/>
    </location>
</feature>
<feature type="region of interest" description="NMP" evidence="1 13">
    <location>
        <begin position="30"/>
        <end position="59"/>
    </location>
</feature>
<feature type="region of interest" description="LID" evidence="1 13">
    <location>
        <begin position="122"/>
        <end position="159"/>
    </location>
</feature>
<feature type="binding site" evidence="1 3 4 7 11 12">
    <location>
        <begin position="10"/>
        <end position="15"/>
    </location>
    <ligand>
        <name>ATP</name>
        <dbReference type="ChEBI" id="CHEBI:30616"/>
    </ligand>
</feature>
<feature type="binding site" evidence="1 3 4 7 11 12">
    <location>
        <position position="31"/>
    </location>
    <ligand>
        <name>AMP</name>
        <dbReference type="ChEBI" id="CHEBI:456215"/>
    </ligand>
</feature>
<feature type="binding site" evidence="1 3 4 7 11 12">
    <location>
        <position position="36"/>
    </location>
    <ligand>
        <name>AMP</name>
        <dbReference type="ChEBI" id="CHEBI:456215"/>
    </ligand>
</feature>
<feature type="binding site" evidence="1 3 4 7 11 12">
    <location>
        <begin position="57"/>
        <end position="59"/>
    </location>
    <ligand>
        <name>AMP</name>
        <dbReference type="ChEBI" id="CHEBI:456215"/>
    </ligand>
</feature>
<feature type="binding site" evidence="1 3 7 12">
    <location>
        <begin position="85"/>
        <end position="88"/>
    </location>
    <ligand>
        <name>AMP</name>
        <dbReference type="ChEBI" id="CHEBI:456215"/>
    </ligand>
</feature>
<feature type="binding site" evidence="1 3 4 7 11 12">
    <location>
        <position position="92"/>
    </location>
    <ligand>
        <name>AMP</name>
        <dbReference type="ChEBI" id="CHEBI:456215"/>
    </ligand>
</feature>
<feature type="binding site" evidence="4">
    <location>
        <position position="119"/>
    </location>
    <ligand>
        <name>ATP</name>
        <dbReference type="ChEBI" id="CHEBI:30616"/>
    </ligand>
</feature>
<feature type="binding site" evidence="1 3 4 7 11 12">
    <location>
        <position position="123"/>
    </location>
    <ligand>
        <name>ATP</name>
        <dbReference type="ChEBI" id="CHEBI:30616"/>
    </ligand>
</feature>
<feature type="binding site" evidence="1 3 4 7 12">
    <location>
        <begin position="132"/>
        <end position="133"/>
    </location>
    <ligand>
        <name>ATP</name>
        <dbReference type="ChEBI" id="CHEBI:30616"/>
    </ligand>
</feature>
<feature type="binding site" evidence="1 3 4 7 11 12">
    <location>
        <position position="156"/>
    </location>
    <ligand>
        <name>AMP</name>
        <dbReference type="ChEBI" id="CHEBI:456215"/>
    </ligand>
</feature>
<feature type="binding site" evidence="1 3 7 12">
    <location>
        <position position="167"/>
    </location>
    <ligand>
        <name>AMP</name>
        <dbReference type="ChEBI" id="CHEBI:456215"/>
    </ligand>
</feature>
<feature type="binding site" evidence="1 3 4 7 11 12">
    <location>
        <position position="200"/>
    </location>
    <ligand>
        <name>ATP</name>
        <dbReference type="ChEBI" id="CHEBI:30616"/>
    </ligand>
</feature>
<feature type="modified residue" description="N6-acetyllysine" evidence="6">
    <location>
        <position position="192"/>
    </location>
</feature>
<feature type="mutagenesis site" description="No loss of enzyme activity." evidence="8 12">
    <original>P</original>
    <variation>G</variation>
    <location>
        <position position="9"/>
    </location>
</feature>
<feature type="mutagenesis site" description="No loss of enzyme activity." evidence="8 9 12">
    <original>G</original>
    <variation>V</variation>
    <location>
        <position position="10"/>
    </location>
</feature>
<feature type="mutagenesis site" description="Drastic reduction in enzyme activity." evidence="8 9">
    <original>K</original>
    <variation>Q</variation>
    <location>
        <position position="13"/>
    </location>
</feature>
<feature type="strand" evidence="17">
    <location>
        <begin position="2"/>
        <end position="6"/>
    </location>
</feature>
<feature type="helix" evidence="17">
    <location>
        <begin position="13"/>
        <end position="24"/>
    </location>
</feature>
<feature type="strand" evidence="17">
    <location>
        <begin position="28"/>
        <end position="30"/>
    </location>
</feature>
<feature type="helix" evidence="17">
    <location>
        <begin position="31"/>
        <end position="41"/>
    </location>
</feature>
<feature type="turn" evidence="17">
    <location>
        <begin position="44"/>
        <end position="46"/>
    </location>
</feature>
<feature type="helix" evidence="17">
    <location>
        <begin position="47"/>
        <end position="49"/>
    </location>
</feature>
<feature type="helix" evidence="17">
    <location>
        <begin position="50"/>
        <end position="54"/>
    </location>
</feature>
<feature type="helix" evidence="17">
    <location>
        <begin position="61"/>
        <end position="72"/>
    </location>
</feature>
<feature type="helix" evidence="17">
    <location>
        <begin position="75"/>
        <end position="77"/>
    </location>
</feature>
<feature type="strand" evidence="17">
    <location>
        <begin position="81"/>
        <end position="85"/>
    </location>
</feature>
<feature type="helix" evidence="17">
    <location>
        <begin position="90"/>
        <end position="98"/>
    </location>
</feature>
<feature type="strand" evidence="17">
    <location>
        <begin position="104"/>
        <end position="110"/>
    </location>
</feature>
<feature type="helix" evidence="17">
    <location>
        <begin position="113"/>
        <end position="115"/>
    </location>
</feature>
<feature type="helix" evidence="17">
    <location>
        <begin position="116"/>
        <end position="121"/>
    </location>
</feature>
<feature type="strand" evidence="17">
    <location>
        <begin position="123"/>
        <end position="125"/>
    </location>
</feature>
<feature type="turn" evidence="17">
    <location>
        <begin position="127"/>
        <end position="129"/>
    </location>
</feature>
<feature type="strand" evidence="17">
    <location>
        <begin position="132"/>
        <end position="134"/>
    </location>
</feature>
<feature type="turn" evidence="17">
    <location>
        <begin position="135"/>
        <end position="137"/>
    </location>
</feature>
<feature type="turn" evidence="17">
    <location>
        <begin position="147"/>
        <end position="149"/>
    </location>
</feature>
<feature type="helix" evidence="16">
    <location>
        <begin position="157"/>
        <end position="159"/>
    </location>
</feature>
<feature type="helix" evidence="17">
    <location>
        <begin position="161"/>
        <end position="174"/>
    </location>
</feature>
<feature type="helix" evidence="17">
    <location>
        <begin position="177"/>
        <end position="187"/>
    </location>
</feature>
<feature type="strand" evidence="17">
    <location>
        <begin position="190"/>
        <end position="197"/>
    </location>
</feature>
<feature type="helix" evidence="17">
    <location>
        <begin position="202"/>
        <end position="213"/>
    </location>
</feature>
<name>KAD_ECOLI</name>
<organism>
    <name type="scientific">Escherichia coli (strain K12)</name>
    <dbReference type="NCBI Taxonomy" id="83333"/>
    <lineage>
        <taxon>Bacteria</taxon>
        <taxon>Pseudomonadati</taxon>
        <taxon>Pseudomonadota</taxon>
        <taxon>Gammaproteobacteria</taxon>
        <taxon>Enterobacterales</taxon>
        <taxon>Enterobacteriaceae</taxon>
        <taxon>Escherichia</taxon>
    </lineage>
</organism>
<protein>
    <recommendedName>
        <fullName evidence="1">Adenylate kinase</fullName>
        <shortName evidence="1">AK</shortName>
        <ecNumber evidence="1">2.7.4.3</ecNumber>
    </recommendedName>
    <alternativeName>
        <fullName evidence="1">ATP-AMP transphosphorylase</fullName>
    </alternativeName>
    <alternativeName>
        <fullName evidence="1">ATP:AMP phosphotransferase</fullName>
    </alternativeName>
    <alternativeName>
        <fullName evidence="1">Adenylate monophosphate kinase</fullName>
    </alternativeName>
</protein>
<proteinExistence type="evidence at protein level"/>
<gene>
    <name evidence="1" type="primary">adk</name>
    <name type="synonym">dnaW</name>
    <name type="synonym">plsA</name>
    <name type="ordered locus">b0474</name>
    <name type="ordered locus">JW0463</name>
</gene>